<comment type="function">
    <text evidence="1">Cysteine desulfurases mobilize the sulfur from L-cysteine to yield L-alanine, an essential step in sulfur metabolism for biosynthesis of a variety of sulfur-containing biomolecules. Component of the suf operon, which is activated and required under specific conditions such as oxidative stress and iron limitation. Acts as a potent selenocysteine lyase in vitro, that mobilizes selenium from L-selenocysteine. Selenocysteine lyase activity is however unsure in vivo.</text>
</comment>
<comment type="catalytic activity">
    <reaction evidence="1">
        <text>(sulfur carrier)-H + L-cysteine = (sulfur carrier)-SH + L-alanine</text>
        <dbReference type="Rhea" id="RHEA:43892"/>
        <dbReference type="Rhea" id="RHEA-COMP:14737"/>
        <dbReference type="Rhea" id="RHEA-COMP:14739"/>
        <dbReference type="ChEBI" id="CHEBI:29917"/>
        <dbReference type="ChEBI" id="CHEBI:35235"/>
        <dbReference type="ChEBI" id="CHEBI:57972"/>
        <dbReference type="ChEBI" id="CHEBI:64428"/>
        <dbReference type="EC" id="2.8.1.7"/>
    </reaction>
</comment>
<comment type="catalytic activity">
    <reaction evidence="1">
        <text>L-selenocysteine + AH2 = hydrogenselenide + L-alanine + A + H(+)</text>
        <dbReference type="Rhea" id="RHEA:11632"/>
        <dbReference type="ChEBI" id="CHEBI:13193"/>
        <dbReference type="ChEBI" id="CHEBI:15378"/>
        <dbReference type="ChEBI" id="CHEBI:17499"/>
        <dbReference type="ChEBI" id="CHEBI:29317"/>
        <dbReference type="ChEBI" id="CHEBI:57843"/>
        <dbReference type="ChEBI" id="CHEBI:57972"/>
        <dbReference type="EC" id="4.4.1.16"/>
    </reaction>
</comment>
<comment type="cofactor">
    <cofactor evidence="1">
        <name>pyridoxal 5'-phosphate</name>
        <dbReference type="ChEBI" id="CHEBI:597326"/>
    </cofactor>
</comment>
<comment type="pathway">
    <text evidence="1">Cofactor biosynthesis; iron-sulfur cluster biosynthesis.</text>
</comment>
<comment type="subunit">
    <text evidence="1">Homodimer. Interacts with SufE and the SufBCD complex composed of SufB, SufC and SufD. The interaction with SufE is required to mediate the direct transfer of the sulfur atom from the S-sulfanylcysteine.</text>
</comment>
<comment type="subcellular location">
    <subcellularLocation>
        <location evidence="1">Cytoplasm</location>
    </subcellularLocation>
</comment>
<comment type="similarity">
    <text evidence="1">Belongs to the class-V pyridoxal-phosphate-dependent aminotransferase family. Csd subfamily.</text>
</comment>
<protein>
    <recommendedName>
        <fullName evidence="1">Cysteine desulfurase</fullName>
        <ecNumber evidence="1">2.8.1.7</ecNumber>
    </recommendedName>
    <alternativeName>
        <fullName evidence="1">Selenocysteine beta-lyase</fullName>
        <shortName evidence="1">SCL</shortName>
    </alternativeName>
    <alternativeName>
        <fullName evidence="1">Selenocysteine lyase</fullName>
        <ecNumber evidence="1">4.4.1.16</ecNumber>
    </alternativeName>
    <alternativeName>
        <fullName evidence="1">Selenocysteine reductase</fullName>
    </alternativeName>
</protein>
<evidence type="ECO:0000255" key="1">
    <source>
        <dbReference type="HAMAP-Rule" id="MF_01831"/>
    </source>
</evidence>
<reference key="1">
    <citation type="journal article" date="2008" name="Genome Res.">
        <title>Comparative genome analysis of Salmonella enteritidis PT4 and Salmonella gallinarum 287/91 provides insights into evolutionary and host adaptation pathways.</title>
        <authorList>
            <person name="Thomson N.R."/>
            <person name="Clayton D.J."/>
            <person name="Windhorst D."/>
            <person name="Vernikos G."/>
            <person name="Davidson S."/>
            <person name="Churcher C."/>
            <person name="Quail M.A."/>
            <person name="Stevens M."/>
            <person name="Jones M.A."/>
            <person name="Watson M."/>
            <person name="Barron A."/>
            <person name="Layton A."/>
            <person name="Pickard D."/>
            <person name="Kingsley R.A."/>
            <person name="Bignell A."/>
            <person name="Clark L."/>
            <person name="Harris B."/>
            <person name="Ormond D."/>
            <person name="Abdellah Z."/>
            <person name="Brooks K."/>
            <person name="Cherevach I."/>
            <person name="Chillingworth T."/>
            <person name="Woodward J."/>
            <person name="Norberczak H."/>
            <person name="Lord A."/>
            <person name="Arrowsmith C."/>
            <person name="Jagels K."/>
            <person name="Moule S."/>
            <person name="Mungall K."/>
            <person name="Saunders M."/>
            <person name="Whitehead S."/>
            <person name="Chabalgoity J.A."/>
            <person name="Maskell D."/>
            <person name="Humphreys T."/>
            <person name="Roberts M."/>
            <person name="Barrow P.A."/>
            <person name="Dougan G."/>
            <person name="Parkhill J."/>
        </authorList>
    </citation>
    <scope>NUCLEOTIDE SEQUENCE [LARGE SCALE GENOMIC DNA]</scope>
    <source>
        <strain>287/91 / NCTC 13346</strain>
    </source>
</reference>
<name>SUFS_SALG2</name>
<feature type="chain" id="PRO_1000188307" description="Cysteine desulfurase">
    <location>
        <begin position="1"/>
        <end position="406"/>
    </location>
</feature>
<feature type="active site" description="Cysteine persulfide intermediate" evidence="1">
    <location>
        <position position="364"/>
    </location>
</feature>
<feature type="modified residue" description="N6-(pyridoxal phosphate)lysine" evidence="1">
    <location>
        <position position="226"/>
    </location>
</feature>
<dbReference type="EC" id="2.8.1.7" evidence="1"/>
<dbReference type="EC" id="4.4.1.16" evidence="1"/>
<dbReference type="EMBL" id="AM933173">
    <property type="protein sequence ID" value="CAR37602.1"/>
    <property type="molecule type" value="Genomic_DNA"/>
</dbReference>
<dbReference type="RefSeq" id="WP_000143850.1">
    <property type="nucleotide sequence ID" value="NC_011274.1"/>
</dbReference>
<dbReference type="SMR" id="B5RAT4"/>
<dbReference type="KEGG" id="seg:SG1744"/>
<dbReference type="HOGENOM" id="CLU_003433_2_5_6"/>
<dbReference type="UniPathway" id="UPA00266"/>
<dbReference type="Proteomes" id="UP000008321">
    <property type="component" value="Chromosome"/>
</dbReference>
<dbReference type="GO" id="GO:0005737">
    <property type="term" value="C:cytoplasm"/>
    <property type="evidence" value="ECO:0007669"/>
    <property type="project" value="UniProtKB-SubCell"/>
</dbReference>
<dbReference type="GO" id="GO:0031071">
    <property type="term" value="F:cysteine desulfurase activity"/>
    <property type="evidence" value="ECO:0007669"/>
    <property type="project" value="UniProtKB-UniRule"/>
</dbReference>
<dbReference type="GO" id="GO:0030170">
    <property type="term" value="F:pyridoxal phosphate binding"/>
    <property type="evidence" value="ECO:0007669"/>
    <property type="project" value="InterPro"/>
</dbReference>
<dbReference type="GO" id="GO:0009000">
    <property type="term" value="F:selenocysteine lyase activity"/>
    <property type="evidence" value="ECO:0007669"/>
    <property type="project" value="UniProtKB-UniRule"/>
</dbReference>
<dbReference type="GO" id="GO:0006534">
    <property type="term" value="P:cysteine metabolic process"/>
    <property type="evidence" value="ECO:0007669"/>
    <property type="project" value="InterPro"/>
</dbReference>
<dbReference type="CDD" id="cd06453">
    <property type="entry name" value="SufS_like"/>
    <property type="match status" value="1"/>
</dbReference>
<dbReference type="FunFam" id="3.40.640.10:FF:000042">
    <property type="entry name" value="Cysteine desulfurase"/>
    <property type="match status" value="1"/>
</dbReference>
<dbReference type="Gene3D" id="3.90.1150.10">
    <property type="entry name" value="Aspartate Aminotransferase, domain 1"/>
    <property type="match status" value="1"/>
</dbReference>
<dbReference type="Gene3D" id="3.40.640.10">
    <property type="entry name" value="Type I PLP-dependent aspartate aminotransferase-like (Major domain)"/>
    <property type="match status" value="1"/>
</dbReference>
<dbReference type="HAMAP" id="MF_01831">
    <property type="entry name" value="SufS_aminotrans_5"/>
    <property type="match status" value="1"/>
</dbReference>
<dbReference type="InterPro" id="IPR000192">
    <property type="entry name" value="Aminotrans_V_dom"/>
</dbReference>
<dbReference type="InterPro" id="IPR020578">
    <property type="entry name" value="Aminotrans_V_PyrdxlP_BS"/>
</dbReference>
<dbReference type="InterPro" id="IPR010970">
    <property type="entry name" value="Cys_dSase_SufS"/>
</dbReference>
<dbReference type="InterPro" id="IPR015424">
    <property type="entry name" value="PyrdxlP-dep_Trfase"/>
</dbReference>
<dbReference type="InterPro" id="IPR015421">
    <property type="entry name" value="PyrdxlP-dep_Trfase_major"/>
</dbReference>
<dbReference type="InterPro" id="IPR015422">
    <property type="entry name" value="PyrdxlP-dep_Trfase_small"/>
</dbReference>
<dbReference type="NCBIfam" id="NF006791">
    <property type="entry name" value="PRK09295.1"/>
    <property type="match status" value="1"/>
</dbReference>
<dbReference type="NCBIfam" id="TIGR01979">
    <property type="entry name" value="sufS"/>
    <property type="match status" value="1"/>
</dbReference>
<dbReference type="PANTHER" id="PTHR43586">
    <property type="entry name" value="CYSTEINE DESULFURASE"/>
    <property type="match status" value="1"/>
</dbReference>
<dbReference type="PANTHER" id="PTHR43586:SF25">
    <property type="entry name" value="CYSTEINE DESULFURASE"/>
    <property type="match status" value="1"/>
</dbReference>
<dbReference type="Pfam" id="PF00266">
    <property type="entry name" value="Aminotran_5"/>
    <property type="match status" value="1"/>
</dbReference>
<dbReference type="SUPFAM" id="SSF53383">
    <property type="entry name" value="PLP-dependent transferases"/>
    <property type="match status" value="1"/>
</dbReference>
<dbReference type="PROSITE" id="PS00595">
    <property type="entry name" value="AA_TRANSFER_CLASS_5"/>
    <property type="match status" value="1"/>
</dbReference>
<accession>B5RAT4</accession>
<sequence>MTFPVEKVRADFPILQREVNGLPLAYLDSAASAQKPNQVIDAESAFYRHGYAAVHRGIHTLSAQATESMENVRKQASRFINARSAEELVFVRGTTEGINLVANSWGAENIRAGDNIIISEMEHHANIVPWQMLCERKGAELRVIPLHPDGTLRLETLAALFDDRTRLLAITHVSNVLGTENPLPDMIALARQHGAKVLVDGAQAVMHHAVDVQALDCDFYVFSGHKLYGPTGIGILYVKEALLQEMPPWEGGGSMISTVSLTQGTTWAKAPWRFEAGTPNTGGIIGLGAAIDYVTSLGLDKIGDYEQMLMRYALEQLAQVPDITLYGPAQRLGVIAFNLGKHHAYDVGSFLDNYGIAVRTGHHCAMPLMAWYGVPAMCRASLAMYNTHEEVDRLVAGLTRIHRLLG</sequence>
<proteinExistence type="inferred from homology"/>
<keyword id="KW-0963">Cytoplasm</keyword>
<keyword id="KW-0456">Lyase</keyword>
<keyword id="KW-0663">Pyridoxal phosphate</keyword>
<keyword id="KW-0808">Transferase</keyword>
<gene>
    <name evidence="1" type="primary">sufS</name>
    <name type="ordered locus">SG1744</name>
</gene>
<organism>
    <name type="scientific">Salmonella gallinarum (strain 287/91 / NCTC 13346)</name>
    <dbReference type="NCBI Taxonomy" id="550538"/>
    <lineage>
        <taxon>Bacteria</taxon>
        <taxon>Pseudomonadati</taxon>
        <taxon>Pseudomonadota</taxon>
        <taxon>Gammaproteobacteria</taxon>
        <taxon>Enterobacterales</taxon>
        <taxon>Enterobacteriaceae</taxon>
        <taxon>Salmonella</taxon>
    </lineage>
</organism>